<gene>
    <name type="ordered locus">aq_2164</name>
</gene>
<feature type="chain" id="PRO_0000186976" description="Uncharacterized protein aq_2164">
    <location>
        <begin position="1"/>
        <end position="189"/>
    </location>
</feature>
<reference key="1">
    <citation type="journal article" date="1998" name="Nature">
        <title>The complete genome of the hyperthermophilic bacterium Aquifex aeolicus.</title>
        <authorList>
            <person name="Deckert G."/>
            <person name="Warren P.V."/>
            <person name="Gaasterland T."/>
            <person name="Young W.G."/>
            <person name="Lenox A.L."/>
            <person name="Graham D.E."/>
            <person name="Overbeek R."/>
            <person name="Snead M.A."/>
            <person name="Keller M."/>
            <person name="Aujay M."/>
            <person name="Huber R."/>
            <person name="Feldman R.A."/>
            <person name="Short J.M."/>
            <person name="Olsen G.J."/>
            <person name="Swanson R.V."/>
        </authorList>
    </citation>
    <scope>NUCLEOTIDE SEQUENCE [LARGE SCALE GENOMIC DNA]</scope>
    <source>
        <strain>VF5</strain>
    </source>
</reference>
<name>Y2164_AQUAE</name>
<organism>
    <name type="scientific">Aquifex aeolicus (strain VF5)</name>
    <dbReference type="NCBI Taxonomy" id="224324"/>
    <lineage>
        <taxon>Bacteria</taxon>
        <taxon>Pseudomonadati</taxon>
        <taxon>Aquificota</taxon>
        <taxon>Aquificia</taxon>
        <taxon>Aquificales</taxon>
        <taxon>Aquificaceae</taxon>
        <taxon>Aquifex</taxon>
    </lineage>
</organism>
<dbReference type="EMBL" id="AE000657">
    <property type="protein sequence ID" value="AAC07887.1"/>
    <property type="molecule type" value="Genomic_DNA"/>
</dbReference>
<dbReference type="PIR" id="G70485">
    <property type="entry name" value="G70485"/>
</dbReference>
<dbReference type="RefSeq" id="NP_214484.1">
    <property type="nucleotide sequence ID" value="NC_000918.1"/>
</dbReference>
<dbReference type="RefSeq" id="WP_010881420.1">
    <property type="nucleotide sequence ID" value="NC_000918.1"/>
</dbReference>
<dbReference type="STRING" id="224324.aq_2164"/>
<dbReference type="EnsemblBacteria" id="AAC07887">
    <property type="protein sequence ID" value="AAC07887"/>
    <property type="gene ID" value="aq_2164"/>
</dbReference>
<dbReference type="KEGG" id="aae:aq_2164"/>
<dbReference type="HOGENOM" id="CLU_1431861_0_0_0"/>
<dbReference type="InParanoid" id="O67915"/>
<dbReference type="Proteomes" id="UP000000798">
    <property type="component" value="Chromosome"/>
</dbReference>
<sequence>MKEDKKVLHVANMTNGLIVYPDYDYIVYFPSSYTAAGTPLYFPEFAVPIDLIKALLEEKKVIMYDATVHENKELTDAFLKGVPTFLMALNRAIHGTKGLFEKLEKGYKVCPWQTPDIVQHAVYRLPKHYYKFLKKCVKLFAPEKRGKLWISIPENVELVVEKIDRRLNDNYEEIAKMIKEKKSIHTYRV</sequence>
<keyword id="KW-1185">Reference proteome</keyword>
<accession>O67915</accession>
<proteinExistence type="predicted"/>
<protein>
    <recommendedName>
        <fullName>Uncharacterized protein aq_2164</fullName>
    </recommendedName>
</protein>